<gene>
    <name type="ordered locus">aq_581</name>
</gene>
<reference key="1">
    <citation type="journal article" date="1998" name="Nature">
        <title>The complete genome of the hyperthermophilic bacterium Aquifex aeolicus.</title>
        <authorList>
            <person name="Deckert G."/>
            <person name="Warren P.V."/>
            <person name="Gaasterland T."/>
            <person name="Young W.G."/>
            <person name="Lenox A.L."/>
            <person name="Graham D.E."/>
            <person name="Overbeek R."/>
            <person name="Snead M.A."/>
            <person name="Keller M."/>
            <person name="Aujay M."/>
            <person name="Huber R."/>
            <person name="Feldman R.A."/>
            <person name="Short J.M."/>
            <person name="Olsen G.J."/>
            <person name="Swanson R.V."/>
        </authorList>
    </citation>
    <scope>NUCLEOTIDE SEQUENCE [LARGE SCALE GENOMIC DNA]</scope>
    <source>
        <strain>VF5</strain>
    </source>
</reference>
<keyword id="KW-0175">Coiled coil</keyword>
<keyword id="KW-1185">Reference proteome</keyword>
<evidence type="ECO:0000255" key="1"/>
<accession>O66848</accession>
<dbReference type="EMBL" id="AE000657">
    <property type="protein sequence ID" value="AAC06807.1"/>
    <property type="molecule type" value="Genomic_DNA"/>
</dbReference>
<dbReference type="PIR" id="D70352">
    <property type="entry name" value="D70352"/>
</dbReference>
<dbReference type="RefSeq" id="NP_213408.1">
    <property type="nucleotide sequence ID" value="NC_000918.1"/>
</dbReference>
<dbReference type="RefSeq" id="WP_010880346.1">
    <property type="nucleotide sequence ID" value="NC_000918.1"/>
</dbReference>
<dbReference type="SMR" id="O66848"/>
<dbReference type="STRING" id="224324.aq_581"/>
<dbReference type="EnsemblBacteria" id="AAC06807">
    <property type="protein sequence ID" value="AAC06807"/>
    <property type="gene ID" value="aq_581"/>
</dbReference>
<dbReference type="KEGG" id="aae:aq_581"/>
<dbReference type="HOGENOM" id="CLU_1494307_0_0_0"/>
<dbReference type="InParanoid" id="O66848"/>
<dbReference type="OrthoDB" id="14317at2"/>
<dbReference type="Proteomes" id="UP000000798">
    <property type="component" value="Chromosome"/>
</dbReference>
<feature type="chain" id="PRO_0000186871" description="Uncharacterized protein aq_581">
    <location>
        <begin position="1"/>
        <end position="175"/>
    </location>
</feature>
<feature type="coiled-coil region" evidence="1">
    <location>
        <begin position="107"/>
        <end position="138"/>
    </location>
</feature>
<name>Y581_AQUAE</name>
<sequence>MSTKEIICTLKGQFFLSPREEKFLRLLEEMGIPEEDIQEGIRECLKSVSPKKRKNFPLFKCFSKILEVNKVRALERGKREHLDWKRVFERKVSVVKHLLDFNYTEPKTEEEAEKTLQEIERKIFKKLWENLDKERKREIYNKYKEVKEDEELFKELIKHELRKIFQIPVLSLYVD</sequence>
<organism>
    <name type="scientific">Aquifex aeolicus (strain VF5)</name>
    <dbReference type="NCBI Taxonomy" id="224324"/>
    <lineage>
        <taxon>Bacteria</taxon>
        <taxon>Pseudomonadati</taxon>
        <taxon>Aquificota</taxon>
        <taxon>Aquificia</taxon>
        <taxon>Aquificales</taxon>
        <taxon>Aquificaceae</taxon>
        <taxon>Aquifex</taxon>
    </lineage>
</organism>
<protein>
    <recommendedName>
        <fullName>Uncharacterized protein aq_581</fullName>
    </recommendedName>
</protein>
<proteinExistence type="predicted"/>